<feature type="chain" id="PRO_0000070935" description="Chaperone protein DnaJ">
    <location>
        <begin position="1"/>
        <end position="374"/>
    </location>
</feature>
<feature type="domain" description="J" evidence="1">
    <location>
        <begin position="5"/>
        <end position="70"/>
    </location>
</feature>
<feature type="repeat" description="CXXCXGXG motif">
    <location>
        <begin position="149"/>
        <end position="156"/>
    </location>
</feature>
<feature type="repeat" description="CXXCXGXG motif">
    <location>
        <begin position="165"/>
        <end position="172"/>
    </location>
</feature>
<feature type="repeat" description="CXXCXGXG motif">
    <location>
        <begin position="187"/>
        <end position="194"/>
    </location>
</feature>
<feature type="repeat" description="CXXCXGXG motif">
    <location>
        <begin position="201"/>
        <end position="208"/>
    </location>
</feature>
<feature type="zinc finger region" description="CR-type" evidence="1">
    <location>
        <begin position="136"/>
        <end position="213"/>
    </location>
</feature>
<feature type="binding site" evidence="1">
    <location>
        <position position="149"/>
    </location>
    <ligand>
        <name>Zn(2+)</name>
        <dbReference type="ChEBI" id="CHEBI:29105"/>
        <label>1</label>
    </ligand>
</feature>
<feature type="binding site" evidence="1">
    <location>
        <position position="152"/>
    </location>
    <ligand>
        <name>Zn(2+)</name>
        <dbReference type="ChEBI" id="CHEBI:29105"/>
        <label>1</label>
    </ligand>
</feature>
<feature type="binding site" evidence="1">
    <location>
        <position position="165"/>
    </location>
    <ligand>
        <name>Zn(2+)</name>
        <dbReference type="ChEBI" id="CHEBI:29105"/>
        <label>2</label>
    </ligand>
</feature>
<feature type="binding site" evidence="1">
    <location>
        <position position="168"/>
    </location>
    <ligand>
        <name>Zn(2+)</name>
        <dbReference type="ChEBI" id="CHEBI:29105"/>
        <label>2</label>
    </ligand>
</feature>
<feature type="binding site" evidence="1">
    <location>
        <position position="187"/>
    </location>
    <ligand>
        <name>Zn(2+)</name>
        <dbReference type="ChEBI" id="CHEBI:29105"/>
        <label>2</label>
    </ligand>
</feature>
<feature type="binding site" evidence="1">
    <location>
        <position position="190"/>
    </location>
    <ligand>
        <name>Zn(2+)</name>
        <dbReference type="ChEBI" id="CHEBI:29105"/>
        <label>2</label>
    </ligand>
</feature>
<feature type="binding site" evidence="1">
    <location>
        <position position="201"/>
    </location>
    <ligand>
        <name>Zn(2+)</name>
        <dbReference type="ChEBI" id="CHEBI:29105"/>
        <label>1</label>
    </ligand>
</feature>
<feature type="binding site" evidence="1">
    <location>
        <position position="204"/>
    </location>
    <ligand>
        <name>Zn(2+)</name>
        <dbReference type="ChEBI" id="CHEBI:29105"/>
        <label>1</label>
    </ligand>
</feature>
<comment type="function">
    <text evidence="1">Participates actively in the response to hyperosmotic and heat shock by preventing the aggregation of stress-denatured proteins and by disaggregating proteins, also in an autonomous, DnaK-independent fashion. Unfolded proteins bind initially to DnaJ; upon interaction with the DnaJ-bound protein, DnaK hydrolyzes its bound ATP, resulting in the formation of a stable complex. GrpE releases ADP from DnaK; ATP binding to DnaK triggers the release of the substrate protein, thus completing the reaction cycle. Several rounds of ATP-dependent interactions between DnaJ, DnaK and GrpE are required for fully efficient folding. Also involved, together with DnaK and GrpE, in the DNA replication of plasmids through activation of initiation proteins.</text>
</comment>
<comment type="cofactor">
    <cofactor evidence="1">
        <name>Zn(2+)</name>
        <dbReference type="ChEBI" id="CHEBI:29105"/>
    </cofactor>
    <text evidence="1">Binds 2 Zn(2+) ions per monomer.</text>
</comment>
<comment type="subunit">
    <text evidence="1">Homodimer.</text>
</comment>
<comment type="subcellular location">
    <subcellularLocation>
        <location evidence="1">Cytoplasm</location>
    </subcellularLocation>
</comment>
<comment type="domain">
    <text evidence="1">The J domain is necessary and sufficient to stimulate DnaK ATPase activity. Zinc center 1 plays an important role in the autonomous, DnaK-independent chaperone activity of DnaJ. Zinc center 2 is essential for interaction with DnaK and for DnaJ activity.</text>
</comment>
<comment type="similarity">
    <text evidence="1">Belongs to the DnaJ family.</text>
</comment>
<reference key="1">
    <citation type="journal article" date="2003" name="Proc. Natl. Acad. Sci. U.S.A.">
        <title>Complete genome sequence and analysis of Wolinella succinogenes.</title>
        <authorList>
            <person name="Baar C."/>
            <person name="Eppinger M."/>
            <person name="Raddatz G."/>
            <person name="Simon J."/>
            <person name="Lanz C."/>
            <person name="Klimmek O."/>
            <person name="Nandakumar R."/>
            <person name="Gross R."/>
            <person name="Rosinus A."/>
            <person name="Keller H."/>
            <person name="Jagtap P."/>
            <person name="Linke B."/>
            <person name="Meyer F."/>
            <person name="Lederer H."/>
            <person name="Schuster S.C."/>
        </authorList>
    </citation>
    <scope>NUCLEOTIDE SEQUENCE [LARGE SCALE GENOMIC DNA]</scope>
    <source>
        <strain>ATCC 29543 / DSM 1740 / CCUG 13145 / JCM 31913 / LMG 7466 / NCTC 11488 / FDC 602W</strain>
    </source>
</reference>
<protein>
    <recommendedName>
        <fullName evidence="1">Chaperone protein DnaJ</fullName>
    </recommendedName>
</protein>
<accession>Q7M9T3</accession>
<sequence>MEEFDYYEILEIERSASGEEIKKAYRKMAMKYHPDRNEGSSEAEEMFKRVNEAYQVLSDEGKRQLYDRYGKQGLESQGYSGFSGRGFEDVFDDLGSIFDSVFGGGFSSSSRKRSGPKYNLDLAMELDLSFKEAIFGCKKEIKIRYKDACPDCKGTGAKEGKIETCPDCGGRGQVFIRQGFMTFAQTCPKCGGSGERIKEKCPKCNGKGHENKEENLEVSIPEGVDTDNRIRVSRKGHVGKNGERGDLYLVVRVEEDEHFMRHGNDIYLHVPLFFSTVPLGTTLKIPSLRGELELKIPPNTKDKEQFVFKNEGVKDVHSAKKGNLIAQVKIVYPAKINDEQRELLEKLSRSFGVEGTPHEKGFEGVFEKIKGWFS</sequence>
<proteinExistence type="inferred from homology"/>
<keyword id="KW-0143">Chaperone</keyword>
<keyword id="KW-0963">Cytoplasm</keyword>
<keyword id="KW-0235">DNA replication</keyword>
<keyword id="KW-0479">Metal-binding</keyword>
<keyword id="KW-1185">Reference proteome</keyword>
<keyword id="KW-0677">Repeat</keyword>
<keyword id="KW-0346">Stress response</keyword>
<keyword id="KW-0862">Zinc</keyword>
<keyword id="KW-0863">Zinc-finger</keyword>
<organism>
    <name type="scientific">Wolinella succinogenes (strain ATCC 29543 / DSM 1740 / CCUG 13145 / JCM 31913 / LMG 7466 / NCTC 11488 / FDC 602W)</name>
    <name type="common">Vibrio succinogenes</name>
    <dbReference type="NCBI Taxonomy" id="273121"/>
    <lineage>
        <taxon>Bacteria</taxon>
        <taxon>Pseudomonadati</taxon>
        <taxon>Campylobacterota</taxon>
        <taxon>Epsilonproteobacteria</taxon>
        <taxon>Campylobacterales</taxon>
        <taxon>Helicobacteraceae</taxon>
        <taxon>Wolinella</taxon>
    </lineage>
</organism>
<gene>
    <name evidence="1" type="primary">dnaJ</name>
    <name type="ordered locus">WS0698</name>
</gene>
<evidence type="ECO:0000255" key="1">
    <source>
        <dbReference type="HAMAP-Rule" id="MF_01152"/>
    </source>
</evidence>
<name>DNAJ_WOLSU</name>
<dbReference type="EMBL" id="BX571658">
    <property type="protein sequence ID" value="CAE09824.1"/>
    <property type="molecule type" value="Genomic_DNA"/>
</dbReference>
<dbReference type="RefSeq" id="WP_011138624.1">
    <property type="nucleotide sequence ID" value="NC_005090.1"/>
</dbReference>
<dbReference type="SMR" id="Q7M9T3"/>
<dbReference type="STRING" id="273121.WS0698"/>
<dbReference type="KEGG" id="wsu:WS0698"/>
<dbReference type="eggNOG" id="COG0484">
    <property type="taxonomic scope" value="Bacteria"/>
</dbReference>
<dbReference type="HOGENOM" id="CLU_017633_0_7_7"/>
<dbReference type="Proteomes" id="UP000000422">
    <property type="component" value="Chromosome"/>
</dbReference>
<dbReference type="GO" id="GO:0005737">
    <property type="term" value="C:cytoplasm"/>
    <property type="evidence" value="ECO:0007669"/>
    <property type="project" value="UniProtKB-SubCell"/>
</dbReference>
<dbReference type="GO" id="GO:0005524">
    <property type="term" value="F:ATP binding"/>
    <property type="evidence" value="ECO:0007669"/>
    <property type="project" value="InterPro"/>
</dbReference>
<dbReference type="GO" id="GO:0031072">
    <property type="term" value="F:heat shock protein binding"/>
    <property type="evidence" value="ECO:0007669"/>
    <property type="project" value="InterPro"/>
</dbReference>
<dbReference type="GO" id="GO:0051082">
    <property type="term" value="F:unfolded protein binding"/>
    <property type="evidence" value="ECO:0007669"/>
    <property type="project" value="UniProtKB-UniRule"/>
</dbReference>
<dbReference type="GO" id="GO:0008270">
    <property type="term" value="F:zinc ion binding"/>
    <property type="evidence" value="ECO:0007669"/>
    <property type="project" value="UniProtKB-UniRule"/>
</dbReference>
<dbReference type="GO" id="GO:0051085">
    <property type="term" value="P:chaperone cofactor-dependent protein refolding"/>
    <property type="evidence" value="ECO:0007669"/>
    <property type="project" value="TreeGrafter"/>
</dbReference>
<dbReference type="GO" id="GO:0006260">
    <property type="term" value="P:DNA replication"/>
    <property type="evidence" value="ECO:0007669"/>
    <property type="project" value="UniProtKB-KW"/>
</dbReference>
<dbReference type="GO" id="GO:0042026">
    <property type="term" value="P:protein refolding"/>
    <property type="evidence" value="ECO:0007669"/>
    <property type="project" value="TreeGrafter"/>
</dbReference>
<dbReference type="GO" id="GO:0009408">
    <property type="term" value="P:response to heat"/>
    <property type="evidence" value="ECO:0007669"/>
    <property type="project" value="InterPro"/>
</dbReference>
<dbReference type="CDD" id="cd06257">
    <property type="entry name" value="DnaJ"/>
    <property type="match status" value="1"/>
</dbReference>
<dbReference type="CDD" id="cd10747">
    <property type="entry name" value="DnaJ_C"/>
    <property type="match status" value="1"/>
</dbReference>
<dbReference type="CDD" id="cd10719">
    <property type="entry name" value="DnaJ_zf"/>
    <property type="match status" value="1"/>
</dbReference>
<dbReference type="FunFam" id="1.10.287.110:FF:000034">
    <property type="entry name" value="Chaperone protein DnaJ"/>
    <property type="match status" value="1"/>
</dbReference>
<dbReference type="FunFam" id="2.10.230.10:FF:000002">
    <property type="entry name" value="Molecular chaperone DnaJ"/>
    <property type="match status" value="1"/>
</dbReference>
<dbReference type="Gene3D" id="1.10.287.110">
    <property type="entry name" value="DnaJ domain"/>
    <property type="match status" value="1"/>
</dbReference>
<dbReference type="Gene3D" id="2.10.230.10">
    <property type="entry name" value="Heat shock protein DnaJ, cysteine-rich domain"/>
    <property type="match status" value="1"/>
</dbReference>
<dbReference type="Gene3D" id="2.60.260.20">
    <property type="entry name" value="Urease metallochaperone UreE, N-terminal domain"/>
    <property type="match status" value="2"/>
</dbReference>
<dbReference type="HAMAP" id="MF_01152">
    <property type="entry name" value="DnaJ"/>
    <property type="match status" value="1"/>
</dbReference>
<dbReference type="InterPro" id="IPR012724">
    <property type="entry name" value="DnaJ"/>
</dbReference>
<dbReference type="InterPro" id="IPR002939">
    <property type="entry name" value="DnaJ_C"/>
</dbReference>
<dbReference type="InterPro" id="IPR001623">
    <property type="entry name" value="DnaJ_domain"/>
</dbReference>
<dbReference type="InterPro" id="IPR018253">
    <property type="entry name" value="DnaJ_domain_CS"/>
</dbReference>
<dbReference type="InterPro" id="IPR008971">
    <property type="entry name" value="HSP40/DnaJ_pept-bd"/>
</dbReference>
<dbReference type="InterPro" id="IPR001305">
    <property type="entry name" value="HSP_DnaJ_Cys-rich_dom"/>
</dbReference>
<dbReference type="InterPro" id="IPR036410">
    <property type="entry name" value="HSP_DnaJ_Cys-rich_dom_sf"/>
</dbReference>
<dbReference type="InterPro" id="IPR036869">
    <property type="entry name" value="J_dom_sf"/>
</dbReference>
<dbReference type="NCBIfam" id="TIGR02349">
    <property type="entry name" value="DnaJ_bact"/>
    <property type="match status" value="1"/>
</dbReference>
<dbReference type="NCBIfam" id="NF008035">
    <property type="entry name" value="PRK10767.1"/>
    <property type="match status" value="1"/>
</dbReference>
<dbReference type="PANTHER" id="PTHR43096:SF48">
    <property type="entry name" value="CHAPERONE PROTEIN DNAJ"/>
    <property type="match status" value="1"/>
</dbReference>
<dbReference type="PANTHER" id="PTHR43096">
    <property type="entry name" value="DNAJ HOMOLOG 1, MITOCHONDRIAL-RELATED"/>
    <property type="match status" value="1"/>
</dbReference>
<dbReference type="Pfam" id="PF00226">
    <property type="entry name" value="DnaJ"/>
    <property type="match status" value="1"/>
</dbReference>
<dbReference type="Pfam" id="PF01556">
    <property type="entry name" value="DnaJ_C"/>
    <property type="match status" value="1"/>
</dbReference>
<dbReference type="Pfam" id="PF00684">
    <property type="entry name" value="DnaJ_CXXCXGXG"/>
    <property type="match status" value="1"/>
</dbReference>
<dbReference type="PRINTS" id="PR00625">
    <property type="entry name" value="JDOMAIN"/>
</dbReference>
<dbReference type="SMART" id="SM00271">
    <property type="entry name" value="DnaJ"/>
    <property type="match status" value="1"/>
</dbReference>
<dbReference type="SUPFAM" id="SSF46565">
    <property type="entry name" value="Chaperone J-domain"/>
    <property type="match status" value="1"/>
</dbReference>
<dbReference type="SUPFAM" id="SSF57938">
    <property type="entry name" value="DnaJ/Hsp40 cysteine-rich domain"/>
    <property type="match status" value="1"/>
</dbReference>
<dbReference type="SUPFAM" id="SSF49493">
    <property type="entry name" value="HSP40/DnaJ peptide-binding domain"/>
    <property type="match status" value="2"/>
</dbReference>
<dbReference type="PROSITE" id="PS00636">
    <property type="entry name" value="DNAJ_1"/>
    <property type="match status" value="1"/>
</dbReference>
<dbReference type="PROSITE" id="PS50076">
    <property type="entry name" value="DNAJ_2"/>
    <property type="match status" value="1"/>
</dbReference>
<dbReference type="PROSITE" id="PS51188">
    <property type="entry name" value="ZF_CR"/>
    <property type="match status" value="1"/>
</dbReference>